<comment type="function">
    <text evidence="1">Probably mediates the hydrolysis of some nucleoside diphosphate derivatives.</text>
</comment>
<comment type="cofactor">
    <cofactor evidence="1">
        <name>Mn(2+)</name>
        <dbReference type="ChEBI" id="CHEBI:29035"/>
    </cofactor>
    <cofactor evidence="1">
        <name>Mg(2+)</name>
        <dbReference type="ChEBI" id="CHEBI:18420"/>
    </cofactor>
</comment>
<comment type="similarity">
    <text evidence="1">Belongs to the Nudix hydrolase family. PCD1 subfamily.</text>
</comment>
<proteinExistence type="inferred from homology"/>
<protein>
    <recommendedName>
        <fullName evidence="1">Uncharacterized Nudix hydrolase NudL</fullName>
        <ecNumber evidence="1">3.6.1.-</ecNumber>
    </recommendedName>
</protein>
<name>NUDL_SALPB</name>
<dbReference type="EC" id="3.6.1.-" evidence="1"/>
<dbReference type="EMBL" id="CP000886">
    <property type="protein sequence ID" value="ABX66797.1"/>
    <property type="molecule type" value="Genomic_DNA"/>
</dbReference>
<dbReference type="RefSeq" id="WP_000381544.1">
    <property type="nucleotide sequence ID" value="NC_010102.1"/>
</dbReference>
<dbReference type="SMR" id="A9MVU1"/>
<dbReference type="KEGG" id="spq:SPAB_01389"/>
<dbReference type="PATRIC" id="fig|1016998.12.peg.1310"/>
<dbReference type="HOGENOM" id="CLU_040940_5_2_6"/>
<dbReference type="BioCyc" id="SENT1016998:SPAB_RS05685-MONOMER"/>
<dbReference type="Proteomes" id="UP000008556">
    <property type="component" value="Chromosome"/>
</dbReference>
<dbReference type="GO" id="GO:0010945">
    <property type="term" value="F:coenzyme A diphosphatase activity"/>
    <property type="evidence" value="ECO:0007669"/>
    <property type="project" value="InterPro"/>
</dbReference>
<dbReference type="GO" id="GO:0000287">
    <property type="term" value="F:magnesium ion binding"/>
    <property type="evidence" value="ECO:0007669"/>
    <property type="project" value="UniProtKB-UniRule"/>
</dbReference>
<dbReference type="GO" id="GO:0030145">
    <property type="term" value="F:manganese ion binding"/>
    <property type="evidence" value="ECO:0007669"/>
    <property type="project" value="UniProtKB-UniRule"/>
</dbReference>
<dbReference type="GO" id="GO:0009132">
    <property type="term" value="P:nucleoside diphosphate metabolic process"/>
    <property type="evidence" value="ECO:0007669"/>
    <property type="project" value="InterPro"/>
</dbReference>
<dbReference type="CDD" id="cd03426">
    <property type="entry name" value="NUDIX_CoAse_Nudt7"/>
    <property type="match status" value="1"/>
</dbReference>
<dbReference type="Gene3D" id="3.90.79.10">
    <property type="entry name" value="Nucleoside Triphosphate Pyrophosphohydrolase"/>
    <property type="match status" value="1"/>
</dbReference>
<dbReference type="HAMAP" id="MF_01592">
    <property type="entry name" value="Nudix_NudL"/>
    <property type="match status" value="1"/>
</dbReference>
<dbReference type="InterPro" id="IPR045121">
    <property type="entry name" value="CoAse"/>
</dbReference>
<dbReference type="InterPro" id="IPR015797">
    <property type="entry name" value="NUDIX_hydrolase-like_dom_sf"/>
</dbReference>
<dbReference type="InterPro" id="IPR000086">
    <property type="entry name" value="NUDIX_hydrolase_dom"/>
</dbReference>
<dbReference type="InterPro" id="IPR000059">
    <property type="entry name" value="NUDIX_hydrolase_NudL_CS"/>
</dbReference>
<dbReference type="InterPro" id="IPR023735">
    <property type="entry name" value="Nudix_NudL"/>
</dbReference>
<dbReference type="NCBIfam" id="NF007980">
    <property type="entry name" value="PRK10707.1"/>
    <property type="match status" value="1"/>
</dbReference>
<dbReference type="PANTHER" id="PTHR12992:SF11">
    <property type="entry name" value="MITOCHONDRIAL COENZYME A DIPHOSPHATASE NUDT8"/>
    <property type="match status" value="1"/>
</dbReference>
<dbReference type="PANTHER" id="PTHR12992">
    <property type="entry name" value="NUDIX HYDROLASE"/>
    <property type="match status" value="1"/>
</dbReference>
<dbReference type="Pfam" id="PF00293">
    <property type="entry name" value="NUDIX"/>
    <property type="match status" value="1"/>
</dbReference>
<dbReference type="SUPFAM" id="SSF55811">
    <property type="entry name" value="Nudix"/>
    <property type="match status" value="1"/>
</dbReference>
<dbReference type="PROSITE" id="PS51462">
    <property type="entry name" value="NUDIX"/>
    <property type="match status" value="1"/>
</dbReference>
<dbReference type="PROSITE" id="PS01293">
    <property type="entry name" value="NUDIX_COA"/>
    <property type="match status" value="1"/>
</dbReference>
<evidence type="ECO:0000255" key="1">
    <source>
        <dbReference type="HAMAP-Rule" id="MF_01592"/>
    </source>
</evidence>
<sequence>MDTSRLTLDHFLSRFQLLRPQMTHETLNQRQAAVLIPVVRRPQPGLLLTQRAIHLRKHAGQVAFPGGAVDSTDASLIAAALREAQEEVAIPPQAVEVIGVLPPVDSVTGFQVTPVVGIIPPNLPWRASEDEVSAVFEMPLAQALQLGRYHPLDVYRRGNSHRVWLSWYEHYFVWGMTANILRELALQIGVKP</sequence>
<gene>
    <name evidence="1" type="primary">nudL</name>
    <name type="ordered locus">SPAB_01389</name>
</gene>
<reference key="1">
    <citation type="submission" date="2007-11" db="EMBL/GenBank/DDBJ databases">
        <authorList>
            <consortium name="The Salmonella enterica serovar Paratyphi B Genome Sequencing Project"/>
            <person name="McClelland M."/>
            <person name="Sanderson E.K."/>
            <person name="Porwollik S."/>
            <person name="Spieth J."/>
            <person name="Clifton W.S."/>
            <person name="Fulton R."/>
            <person name="Cordes M."/>
            <person name="Wollam A."/>
            <person name="Shah N."/>
            <person name="Pepin K."/>
            <person name="Bhonagiri V."/>
            <person name="Nash W."/>
            <person name="Johnson M."/>
            <person name="Thiruvilangam P."/>
            <person name="Wilson R."/>
        </authorList>
    </citation>
    <scope>NUCLEOTIDE SEQUENCE [LARGE SCALE GENOMIC DNA]</scope>
    <source>
        <strain>ATCC BAA-1250 / SPB7</strain>
    </source>
</reference>
<feature type="chain" id="PRO_1000087978" description="Uncharacterized Nudix hydrolase NudL">
    <location>
        <begin position="1"/>
        <end position="192"/>
    </location>
</feature>
<feature type="domain" description="Nudix hydrolase" evidence="1">
    <location>
        <begin position="29"/>
        <end position="160"/>
    </location>
</feature>
<feature type="short sequence motif" description="Nudix box">
    <location>
        <begin position="67"/>
        <end position="89"/>
    </location>
</feature>
<feature type="binding site" evidence="1">
    <location>
        <position position="83"/>
    </location>
    <ligand>
        <name>Mg(2+)</name>
        <dbReference type="ChEBI" id="CHEBI:18420"/>
    </ligand>
</feature>
<feature type="binding site" evidence="1">
    <location>
        <position position="87"/>
    </location>
    <ligand>
        <name>Mg(2+)</name>
        <dbReference type="ChEBI" id="CHEBI:18420"/>
    </ligand>
</feature>
<accession>A9MVU1</accession>
<organism>
    <name type="scientific">Salmonella paratyphi B (strain ATCC BAA-1250 / SPB7)</name>
    <dbReference type="NCBI Taxonomy" id="1016998"/>
    <lineage>
        <taxon>Bacteria</taxon>
        <taxon>Pseudomonadati</taxon>
        <taxon>Pseudomonadota</taxon>
        <taxon>Gammaproteobacteria</taxon>
        <taxon>Enterobacterales</taxon>
        <taxon>Enterobacteriaceae</taxon>
        <taxon>Salmonella</taxon>
    </lineage>
</organism>
<keyword id="KW-0378">Hydrolase</keyword>
<keyword id="KW-0460">Magnesium</keyword>
<keyword id="KW-0464">Manganese</keyword>
<keyword id="KW-0479">Metal-binding</keyword>